<keyword id="KW-0963">Cytoplasm</keyword>
<keyword id="KW-0378">Hydrolase</keyword>
<keyword id="KW-0540">Nuclease</keyword>
<keyword id="KW-0690">Ribosome biogenesis</keyword>
<protein>
    <recommendedName>
        <fullName evidence="1">Putative pre-16S rRNA nuclease</fullName>
        <ecNumber evidence="1">3.1.-.-</ecNumber>
    </recommendedName>
</protein>
<organism>
    <name type="scientific">Rhodopseudomonas palustris (strain ATCC BAA-98 / CGA009)</name>
    <dbReference type="NCBI Taxonomy" id="258594"/>
    <lineage>
        <taxon>Bacteria</taxon>
        <taxon>Pseudomonadati</taxon>
        <taxon>Pseudomonadota</taxon>
        <taxon>Alphaproteobacteria</taxon>
        <taxon>Hyphomicrobiales</taxon>
        <taxon>Nitrobacteraceae</taxon>
        <taxon>Rhodopseudomonas</taxon>
    </lineage>
</organism>
<sequence length="160" mass="17084">MPALILPLIEAAVHWPVRGALLGLDLGTKTIGVAASDPDRKLATGVETIARKAFTADAARLLALAAERTACGFVLGLPLNMDGSEGPRAQSTRAFARNLSRLTELPIGLWDERLSTAAVERELIANDVSRAKRAKVIDEHAAIFILQGALDRLAALRRAE</sequence>
<name>YQGF_RHOPA</name>
<dbReference type="EC" id="3.1.-.-" evidence="1"/>
<dbReference type="EMBL" id="BX572603">
    <property type="protein sequence ID" value="CAE28554.1"/>
    <property type="molecule type" value="Genomic_DNA"/>
</dbReference>
<dbReference type="RefSeq" id="WP_011158658.1">
    <property type="nucleotide sequence ID" value="NZ_CP116810.1"/>
</dbReference>
<dbReference type="SMR" id="Q6N569"/>
<dbReference type="STRING" id="258594.RPA3113"/>
<dbReference type="GeneID" id="66894195"/>
<dbReference type="eggNOG" id="COG0816">
    <property type="taxonomic scope" value="Bacteria"/>
</dbReference>
<dbReference type="HOGENOM" id="CLU_098240_1_1_5"/>
<dbReference type="PhylomeDB" id="Q6N569"/>
<dbReference type="GO" id="GO:0005829">
    <property type="term" value="C:cytosol"/>
    <property type="evidence" value="ECO:0007669"/>
    <property type="project" value="TreeGrafter"/>
</dbReference>
<dbReference type="GO" id="GO:0004518">
    <property type="term" value="F:nuclease activity"/>
    <property type="evidence" value="ECO:0007669"/>
    <property type="project" value="UniProtKB-KW"/>
</dbReference>
<dbReference type="GO" id="GO:0000967">
    <property type="term" value="P:rRNA 5'-end processing"/>
    <property type="evidence" value="ECO:0007669"/>
    <property type="project" value="UniProtKB-UniRule"/>
</dbReference>
<dbReference type="CDD" id="cd16964">
    <property type="entry name" value="YqgF"/>
    <property type="match status" value="1"/>
</dbReference>
<dbReference type="Gene3D" id="3.30.420.140">
    <property type="entry name" value="YqgF/RNase H-like domain"/>
    <property type="match status" value="1"/>
</dbReference>
<dbReference type="HAMAP" id="MF_00651">
    <property type="entry name" value="Nuclease_YqgF"/>
    <property type="match status" value="1"/>
</dbReference>
<dbReference type="InterPro" id="IPR012337">
    <property type="entry name" value="RNaseH-like_sf"/>
</dbReference>
<dbReference type="InterPro" id="IPR005227">
    <property type="entry name" value="YqgF"/>
</dbReference>
<dbReference type="InterPro" id="IPR006641">
    <property type="entry name" value="YqgF/RNaseH-like_dom"/>
</dbReference>
<dbReference type="InterPro" id="IPR037027">
    <property type="entry name" value="YqgF/RNaseH-like_dom_sf"/>
</dbReference>
<dbReference type="NCBIfam" id="TIGR00250">
    <property type="entry name" value="RNAse_H_YqgF"/>
    <property type="match status" value="1"/>
</dbReference>
<dbReference type="PANTHER" id="PTHR33317">
    <property type="entry name" value="POLYNUCLEOTIDYL TRANSFERASE, RIBONUCLEASE H-LIKE SUPERFAMILY PROTEIN"/>
    <property type="match status" value="1"/>
</dbReference>
<dbReference type="PANTHER" id="PTHR33317:SF4">
    <property type="entry name" value="POLYNUCLEOTIDYL TRANSFERASE, RIBONUCLEASE H-LIKE SUPERFAMILY PROTEIN"/>
    <property type="match status" value="1"/>
</dbReference>
<dbReference type="Pfam" id="PF03652">
    <property type="entry name" value="RuvX"/>
    <property type="match status" value="1"/>
</dbReference>
<dbReference type="SMART" id="SM00732">
    <property type="entry name" value="YqgFc"/>
    <property type="match status" value="1"/>
</dbReference>
<dbReference type="SUPFAM" id="SSF53098">
    <property type="entry name" value="Ribonuclease H-like"/>
    <property type="match status" value="1"/>
</dbReference>
<reference key="1">
    <citation type="journal article" date="2004" name="Nat. Biotechnol.">
        <title>Complete genome sequence of the metabolically versatile photosynthetic bacterium Rhodopseudomonas palustris.</title>
        <authorList>
            <person name="Larimer F.W."/>
            <person name="Chain P."/>
            <person name="Hauser L."/>
            <person name="Lamerdin J.E."/>
            <person name="Malfatti S."/>
            <person name="Do L."/>
            <person name="Land M.L."/>
            <person name="Pelletier D.A."/>
            <person name="Beatty J.T."/>
            <person name="Lang A.S."/>
            <person name="Tabita F.R."/>
            <person name="Gibson J.L."/>
            <person name="Hanson T.E."/>
            <person name="Bobst C."/>
            <person name="Torres y Torres J.L."/>
            <person name="Peres C."/>
            <person name="Harrison F.H."/>
            <person name="Gibson J."/>
            <person name="Harwood C.S."/>
        </authorList>
    </citation>
    <scope>NUCLEOTIDE SEQUENCE [LARGE SCALE GENOMIC DNA]</scope>
    <source>
        <strain>ATCC BAA-98 / CGA009</strain>
    </source>
</reference>
<accession>Q6N569</accession>
<evidence type="ECO:0000255" key="1">
    <source>
        <dbReference type="HAMAP-Rule" id="MF_00651"/>
    </source>
</evidence>
<feature type="chain" id="PRO_0000172127" description="Putative pre-16S rRNA nuclease">
    <location>
        <begin position="1"/>
        <end position="160"/>
    </location>
</feature>
<gene>
    <name type="ordered locus">RPA3113</name>
</gene>
<comment type="function">
    <text evidence="1">Could be a nuclease involved in processing of the 5'-end of pre-16S rRNA.</text>
</comment>
<comment type="subcellular location">
    <subcellularLocation>
        <location evidence="1">Cytoplasm</location>
    </subcellularLocation>
</comment>
<comment type="similarity">
    <text evidence="1">Belongs to the YqgF nuclease family.</text>
</comment>
<proteinExistence type="inferred from homology"/>